<dbReference type="EC" id="2.7.1.30" evidence="1"/>
<dbReference type="EMBL" id="CP000378">
    <property type="protein sequence ID" value="ABF76968.1"/>
    <property type="molecule type" value="Genomic_DNA"/>
</dbReference>
<dbReference type="SMR" id="Q1BTT7"/>
<dbReference type="HOGENOM" id="CLU_009281_2_3_4"/>
<dbReference type="UniPathway" id="UPA00618">
    <property type="reaction ID" value="UER00672"/>
</dbReference>
<dbReference type="GO" id="GO:0005829">
    <property type="term" value="C:cytosol"/>
    <property type="evidence" value="ECO:0007669"/>
    <property type="project" value="TreeGrafter"/>
</dbReference>
<dbReference type="GO" id="GO:0005524">
    <property type="term" value="F:ATP binding"/>
    <property type="evidence" value="ECO:0007669"/>
    <property type="project" value="UniProtKB-UniRule"/>
</dbReference>
<dbReference type="GO" id="GO:0004370">
    <property type="term" value="F:glycerol kinase activity"/>
    <property type="evidence" value="ECO:0000250"/>
    <property type="project" value="UniProtKB"/>
</dbReference>
<dbReference type="GO" id="GO:0019563">
    <property type="term" value="P:glycerol catabolic process"/>
    <property type="evidence" value="ECO:0007669"/>
    <property type="project" value="UniProtKB-UniRule"/>
</dbReference>
<dbReference type="GO" id="GO:0006071">
    <property type="term" value="P:glycerol metabolic process"/>
    <property type="evidence" value="ECO:0000250"/>
    <property type="project" value="UniProtKB"/>
</dbReference>
<dbReference type="GO" id="GO:0006072">
    <property type="term" value="P:glycerol-3-phosphate metabolic process"/>
    <property type="evidence" value="ECO:0007669"/>
    <property type="project" value="InterPro"/>
</dbReference>
<dbReference type="CDD" id="cd07786">
    <property type="entry name" value="FGGY_EcGK_like"/>
    <property type="match status" value="1"/>
</dbReference>
<dbReference type="FunFam" id="3.30.420.40:FF:000007">
    <property type="entry name" value="Glycerol kinase"/>
    <property type="match status" value="1"/>
</dbReference>
<dbReference type="FunFam" id="3.30.420.40:FF:000008">
    <property type="entry name" value="Glycerol kinase"/>
    <property type="match status" value="1"/>
</dbReference>
<dbReference type="Gene3D" id="3.30.420.40">
    <property type="match status" value="2"/>
</dbReference>
<dbReference type="HAMAP" id="MF_00186">
    <property type="entry name" value="Glycerol_kin"/>
    <property type="match status" value="1"/>
</dbReference>
<dbReference type="InterPro" id="IPR043129">
    <property type="entry name" value="ATPase_NBD"/>
</dbReference>
<dbReference type="InterPro" id="IPR000577">
    <property type="entry name" value="Carb_kinase_FGGY"/>
</dbReference>
<dbReference type="InterPro" id="IPR018483">
    <property type="entry name" value="Carb_kinase_FGGY_CS"/>
</dbReference>
<dbReference type="InterPro" id="IPR018485">
    <property type="entry name" value="FGGY_C"/>
</dbReference>
<dbReference type="InterPro" id="IPR018484">
    <property type="entry name" value="FGGY_N"/>
</dbReference>
<dbReference type="InterPro" id="IPR005999">
    <property type="entry name" value="Glycerol_kin"/>
</dbReference>
<dbReference type="NCBIfam" id="TIGR01311">
    <property type="entry name" value="glycerol_kin"/>
    <property type="match status" value="1"/>
</dbReference>
<dbReference type="NCBIfam" id="NF000756">
    <property type="entry name" value="PRK00047.1"/>
    <property type="match status" value="1"/>
</dbReference>
<dbReference type="PANTHER" id="PTHR10196:SF69">
    <property type="entry name" value="GLYCEROL KINASE"/>
    <property type="match status" value="1"/>
</dbReference>
<dbReference type="PANTHER" id="PTHR10196">
    <property type="entry name" value="SUGAR KINASE"/>
    <property type="match status" value="1"/>
</dbReference>
<dbReference type="Pfam" id="PF02782">
    <property type="entry name" value="FGGY_C"/>
    <property type="match status" value="1"/>
</dbReference>
<dbReference type="Pfam" id="PF00370">
    <property type="entry name" value="FGGY_N"/>
    <property type="match status" value="1"/>
</dbReference>
<dbReference type="PIRSF" id="PIRSF000538">
    <property type="entry name" value="GlpK"/>
    <property type="match status" value="1"/>
</dbReference>
<dbReference type="SUPFAM" id="SSF53067">
    <property type="entry name" value="Actin-like ATPase domain"/>
    <property type="match status" value="2"/>
</dbReference>
<dbReference type="PROSITE" id="PS00933">
    <property type="entry name" value="FGGY_KINASES_1"/>
    <property type="match status" value="1"/>
</dbReference>
<dbReference type="PROSITE" id="PS00445">
    <property type="entry name" value="FGGY_KINASES_2"/>
    <property type="match status" value="1"/>
</dbReference>
<keyword id="KW-0067">ATP-binding</keyword>
<keyword id="KW-0319">Glycerol metabolism</keyword>
<keyword id="KW-0418">Kinase</keyword>
<keyword id="KW-0547">Nucleotide-binding</keyword>
<keyword id="KW-0808">Transferase</keyword>
<gene>
    <name evidence="1" type="primary">glpK</name>
    <name type="ordered locus">Bcen_2067</name>
</gene>
<feature type="chain" id="PRO_1000020709" description="Glycerol kinase">
    <location>
        <begin position="1"/>
        <end position="500"/>
    </location>
</feature>
<feature type="binding site" evidence="1">
    <location>
        <position position="13"/>
    </location>
    <ligand>
        <name>ADP</name>
        <dbReference type="ChEBI" id="CHEBI:456216"/>
    </ligand>
</feature>
<feature type="binding site" evidence="1">
    <location>
        <position position="13"/>
    </location>
    <ligand>
        <name>ATP</name>
        <dbReference type="ChEBI" id="CHEBI:30616"/>
    </ligand>
</feature>
<feature type="binding site" evidence="1">
    <location>
        <position position="13"/>
    </location>
    <ligand>
        <name>sn-glycerol 3-phosphate</name>
        <dbReference type="ChEBI" id="CHEBI:57597"/>
    </ligand>
</feature>
<feature type="binding site" evidence="1">
    <location>
        <position position="14"/>
    </location>
    <ligand>
        <name>ATP</name>
        <dbReference type="ChEBI" id="CHEBI:30616"/>
    </ligand>
</feature>
<feature type="binding site" evidence="1">
    <location>
        <position position="15"/>
    </location>
    <ligand>
        <name>ATP</name>
        <dbReference type="ChEBI" id="CHEBI:30616"/>
    </ligand>
</feature>
<feature type="binding site" evidence="1">
    <location>
        <position position="17"/>
    </location>
    <ligand>
        <name>ADP</name>
        <dbReference type="ChEBI" id="CHEBI:456216"/>
    </ligand>
</feature>
<feature type="binding site" evidence="1">
    <location>
        <position position="83"/>
    </location>
    <ligand>
        <name>glycerol</name>
        <dbReference type="ChEBI" id="CHEBI:17754"/>
    </ligand>
</feature>
<feature type="binding site" evidence="1">
    <location>
        <position position="83"/>
    </location>
    <ligand>
        <name>sn-glycerol 3-phosphate</name>
        <dbReference type="ChEBI" id="CHEBI:57597"/>
    </ligand>
</feature>
<feature type="binding site" evidence="1">
    <location>
        <position position="84"/>
    </location>
    <ligand>
        <name>glycerol</name>
        <dbReference type="ChEBI" id="CHEBI:17754"/>
    </ligand>
</feature>
<feature type="binding site" evidence="1">
    <location>
        <position position="84"/>
    </location>
    <ligand>
        <name>sn-glycerol 3-phosphate</name>
        <dbReference type="ChEBI" id="CHEBI:57597"/>
    </ligand>
</feature>
<feature type="binding site" evidence="1">
    <location>
        <position position="135"/>
    </location>
    <ligand>
        <name>glycerol</name>
        <dbReference type="ChEBI" id="CHEBI:17754"/>
    </ligand>
</feature>
<feature type="binding site" evidence="1">
    <location>
        <position position="135"/>
    </location>
    <ligand>
        <name>sn-glycerol 3-phosphate</name>
        <dbReference type="ChEBI" id="CHEBI:57597"/>
    </ligand>
</feature>
<feature type="binding site" evidence="1">
    <location>
        <position position="244"/>
    </location>
    <ligand>
        <name>glycerol</name>
        <dbReference type="ChEBI" id="CHEBI:17754"/>
    </ligand>
</feature>
<feature type="binding site" evidence="1">
    <location>
        <position position="244"/>
    </location>
    <ligand>
        <name>sn-glycerol 3-phosphate</name>
        <dbReference type="ChEBI" id="CHEBI:57597"/>
    </ligand>
</feature>
<feature type="binding site" evidence="1">
    <location>
        <position position="245"/>
    </location>
    <ligand>
        <name>glycerol</name>
        <dbReference type="ChEBI" id="CHEBI:17754"/>
    </ligand>
</feature>
<feature type="binding site" evidence="1">
    <location>
        <position position="266"/>
    </location>
    <ligand>
        <name>ADP</name>
        <dbReference type="ChEBI" id="CHEBI:456216"/>
    </ligand>
</feature>
<feature type="binding site" evidence="1">
    <location>
        <position position="266"/>
    </location>
    <ligand>
        <name>ATP</name>
        <dbReference type="ChEBI" id="CHEBI:30616"/>
    </ligand>
</feature>
<feature type="binding site" evidence="1">
    <location>
        <position position="309"/>
    </location>
    <ligand>
        <name>ADP</name>
        <dbReference type="ChEBI" id="CHEBI:456216"/>
    </ligand>
</feature>
<feature type="binding site" evidence="1">
    <location>
        <position position="309"/>
    </location>
    <ligand>
        <name>ATP</name>
        <dbReference type="ChEBI" id="CHEBI:30616"/>
    </ligand>
</feature>
<feature type="binding site" evidence="1">
    <location>
        <position position="313"/>
    </location>
    <ligand>
        <name>ATP</name>
        <dbReference type="ChEBI" id="CHEBI:30616"/>
    </ligand>
</feature>
<feature type="binding site" evidence="1">
    <location>
        <position position="410"/>
    </location>
    <ligand>
        <name>ADP</name>
        <dbReference type="ChEBI" id="CHEBI:456216"/>
    </ligand>
</feature>
<feature type="binding site" evidence="1">
    <location>
        <position position="410"/>
    </location>
    <ligand>
        <name>ATP</name>
        <dbReference type="ChEBI" id="CHEBI:30616"/>
    </ligand>
</feature>
<feature type="binding site" evidence="1">
    <location>
        <position position="414"/>
    </location>
    <ligand>
        <name>ADP</name>
        <dbReference type="ChEBI" id="CHEBI:456216"/>
    </ligand>
</feature>
<proteinExistence type="inferred from homology"/>
<evidence type="ECO:0000255" key="1">
    <source>
        <dbReference type="HAMAP-Rule" id="MF_00186"/>
    </source>
</evidence>
<sequence>MQDQYILALDQGTTSSRAMLFDRQGNIVSIAQKEFEQIYPQPGWVEHDPQEIWSTQAGVAAEAVTRTGLNGTSIAAIGITNQRETTIVWDRETGQPVYNAIVWQDRRTADFCDSLKKQGLEAKVRAKTGLPIDSYFSATKIRWILDNVPGARDKARQGKLAFGTVDSWLVWNFTKHELHVTDVTNASRTMLFNIHTREWDSELLELLDIPRSMLPEVKASSEIYGHTKTTVFASKIPLAGIAGDQHAALFGQMCTTSGMVKNTYGTGCFLMMNTGDKPIESKNNLVTTIAWQIGDDVQYALEGSIFIAGAVVQWLRDGVGLIKTAAEIEALAASVPHTDGVYLVPAFAGLGAPHWNARARGSVFGVTRGTSAAHLARAALDAIAYQSLDVLAAMEADSGISIGELRVDGGASANDLLMQFQADLLGVDAVRPQITETTALGAAYLAGLAIGYWKNLDEVRDQWQLDRRFAPSMPKEQVEQRMAGWQRAVRAAKAWADDTQ</sequence>
<organism>
    <name type="scientific">Burkholderia orbicola (strain AU 1054)</name>
    <dbReference type="NCBI Taxonomy" id="331271"/>
    <lineage>
        <taxon>Bacteria</taxon>
        <taxon>Pseudomonadati</taxon>
        <taxon>Pseudomonadota</taxon>
        <taxon>Betaproteobacteria</taxon>
        <taxon>Burkholderiales</taxon>
        <taxon>Burkholderiaceae</taxon>
        <taxon>Burkholderia</taxon>
        <taxon>Burkholderia cepacia complex</taxon>
        <taxon>Burkholderia orbicola</taxon>
    </lineage>
</organism>
<reference key="1">
    <citation type="submission" date="2006-05" db="EMBL/GenBank/DDBJ databases">
        <title>Complete sequence of chromosome 1 of Burkholderia cenocepacia AU 1054.</title>
        <authorList>
            <consortium name="US DOE Joint Genome Institute"/>
            <person name="Copeland A."/>
            <person name="Lucas S."/>
            <person name="Lapidus A."/>
            <person name="Barry K."/>
            <person name="Detter J.C."/>
            <person name="Glavina del Rio T."/>
            <person name="Hammon N."/>
            <person name="Israni S."/>
            <person name="Dalin E."/>
            <person name="Tice H."/>
            <person name="Pitluck S."/>
            <person name="Chain P."/>
            <person name="Malfatti S."/>
            <person name="Shin M."/>
            <person name="Vergez L."/>
            <person name="Schmutz J."/>
            <person name="Larimer F."/>
            <person name="Land M."/>
            <person name="Hauser L."/>
            <person name="Kyrpides N."/>
            <person name="Lykidis A."/>
            <person name="LiPuma J.J."/>
            <person name="Konstantinidis K."/>
            <person name="Tiedje J.M."/>
            <person name="Richardson P."/>
        </authorList>
    </citation>
    <scope>NUCLEOTIDE SEQUENCE [LARGE SCALE GENOMIC DNA]</scope>
    <source>
        <strain>AU 1054</strain>
    </source>
</reference>
<accession>Q1BTT7</accession>
<protein>
    <recommendedName>
        <fullName evidence="1">Glycerol kinase</fullName>
        <ecNumber evidence="1">2.7.1.30</ecNumber>
    </recommendedName>
    <alternativeName>
        <fullName evidence="1">ATP:glycerol 3-phosphotransferase</fullName>
    </alternativeName>
    <alternativeName>
        <fullName evidence="1">Glycerokinase</fullName>
        <shortName evidence="1">GK</shortName>
    </alternativeName>
</protein>
<comment type="function">
    <text evidence="1">Key enzyme in the regulation of glycerol uptake and metabolism. Catalyzes the phosphorylation of glycerol to yield sn-glycerol 3-phosphate.</text>
</comment>
<comment type="catalytic activity">
    <reaction evidence="1">
        <text>glycerol + ATP = sn-glycerol 3-phosphate + ADP + H(+)</text>
        <dbReference type="Rhea" id="RHEA:21644"/>
        <dbReference type="ChEBI" id="CHEBI:15378"/>
        <dbReference type="ChEBI" id="CHEBI:17754"/>
        <dbReference type="ChEBI" id="CHEBI:30616"/>
        <dbReference type="ChEBI" id="CHEBI:57597"/>
        <dbReference type="ChEBI" id="CHEBI:456216"/>
        <dbReference type="EC" id="2.7.1.30"/>
    </reaction>
</comment>
<comment type="activity regulation">
    <text evidence="1">Inhibited by fructose 1,6-bisphosphate (FBP).</text>
</comment>
<comment type="pathway">
    <text evidence="1">Polyol metabolism; glycerol degradation via glycerol kinase pathway; sn-glycerol 3-phosphate from glycerol: step 1/1.</text>
</comment>
<comment type="similarity">
    <text evidence="1">Belongs to the FGGY kinase family.</text>
</comment>
<name>GLPK_BURO1</name>